<protein>
    <recommendedName>
        <fullName evidence="1">Succinyl-diaminopimelate desuccinylase</fullName>
        <shortName evidence="1">SDAP desuccinylase</shortName>
        <ecNumber evidence="1">3.5.1.18</ecNumber>
    </recommendedName>
    <alternativeName>
        <fullName evidence="1">N-succinyl-LL-2,6-diaminoheptanedioate amidohydrolase</fullName>
    </alternativeName>
</protein>
<gene>
    <name evidence="1" type="primary">dapE</name>
    <name type="ordered locus">Swoo_2188</name>
</gene>
<name>DAPE_SHEWM</name>
<sequence>MSQEVLTLAQDLISRPSVTPLDEGCQTLMAERLAAQGFEIESMVFEDTTNMWARRGKEGPLFCFAGHTDVVPVGDLNRWHTPPFDPVVIDGYLHGRGAADMKGSLAAMVVATERFVEKHPDHNGSIAFLITSDEEGPFINGTTRVIDTLEARNEKITWSLVGEPSSTHKLGDIVKNGRRGSLTGNLTINGIQGHVAYPHLADNPIHKAAPALDELARMKWDNGNEFFPPTSFQIANINGGTGASNVIPGALEVMFNFRYSTEVTAEILIQRVLNILDAHGLDYDISWIFNGLPFLTGDGPLLDATREAIKQVTGSDTDPQTSGGTSDGRFIAPTGAHVIELGPVNATIHKVNECVKVSDLELLTQCYEVILEKLLC</sequence>
<evidence type="ECO:0000255" key="1">
    <source>
        <dbReference type="HAMAP-Rule" id="MF_01690"/>
    </source>
</evidence>
<keyword id="KW-0028">Amino-acid biosynthesis</keyword>
<keyword id="KW-0170">Cobalt</keyword>
<keyword id="KW-0220">Diaminopimelate biosynthesis</keyword>
<keyword id="KW-0378">Hydrolase</keyword>
<keyword id="KW-0457">Lysine biosynthesis</keyword>
<keyword id="KW-0479">Metal-binding</keyword>
<keyword id="KW-1185">Reference proteome</keyword>
<keyword id="KW-0862">Zinc</keyword>
<organism>
    <name type="scientific">Shewanella woodyi (strain ATCC 51908 / MS32)</name>
    <dbReference type="NCBI Taxonomy" id="392500"/>
    <lineage>
        <taxon>Bacteria</taxon>
        <taxon>Pseudomonadati</taxon>
        <taxon>Pseudomonadota</taxon>
        <taxon>Gammaproteobacteria</taxon>
        <taxon>Alteromonadales</taxon>
        <taxon>Shewanellaceae</taxon>
        <taxon>Shewanella</taxon>
    </lineage>
</organism>
<proteinExistence type="inferred from homology"/>
<feature type="chain" id="PRO_0000375744" description="Succinyl-diaminopimelate desuccinylase">
    <location>
        <begin position="1"/>
        <end position="376"/>
    </location>
</feature>
<feature type="active site" evidence="1">
    <location>
        <position position="69"/>
    </location>
</feature>
<feature type="active site" description="Proton acceptor" evidence="1">
    <location>
        <position position="134"/>
    </location>
</feature>
<feature type="binding site" evidence="1">
    <location>
        <position position="67"/>
    </location>
    <ligand>
        <name>Zn(2+)</name>
        <dbReference type="ChEBI" id="CHEBI:29105"/>
        <label>1</label>
    </ligand>
</feature>
<feature type="binding site" evidence="1">
    <location>
        <position position="100"/>
    </location>
    <ligand>
        <name>Zn(2+)</name>
        <dbReference type="ChEBI" id="CHEBI:29105"/>
        <label>1</label>
    </ligand>
</feature>
<feature type="binding site" evidence="1">
    <location>
        <position position="100"/>
    </location>
    <ligand>
        <name>Zn(2+)</name>
        <dbReference type="ChEBI" id="CHEBI:29105"/>
        <label>2</label>
    </ligand>
</feature>
<feature type="binding site" evidence="1">
    <location>
        <position position="135"/>
    </location>
    <ligand>
        <name>Zn(2+)</name>
        <dbReference type="ChEBI" id="CHEBI:29105"/>
        <label>2</label>
    </ligand>
</feature>
<feature type="binding site" evidence="1">
    <location>
        <position position="163"/>
    </location>
    <ligand>
        <name>Zn(2+)</name>
        <dbReference type="ChEBI" id="CHEBI:29105"/>
        <label>1</label>
    </ligand>
</feature>
<feature type="binding site" evidence="1">
    <location>
        <position position="349"/>
    </location>
    <ligand>
        <name>Zn(2+)</name>
        <dbReference type="ChEBI" id="CHEBI:29105"/>
        <label>2</label>
    </ligand>
</feature>
<reference key="1">
    <citation type="submission" date="2008-02" db="EMBL/GenBank/DDBJ databases">
        <title>Complete sequence of Shewanella woodyi ATCC 51908.</title>
        <authorList>
            <consortium name="US DOE Joint Genome Institute"/>
            <person name="Copeland A."/>
            <person name="Lucas S."/>
            <person name="Lapidus A."/>
            <person name="Glavina del Rio T."/>
            <person name="Dalin E."/>
            <person name="Tice H."/>
            <person name="Bruce D."/>
            <person name="Goodwin L."/>
            <person name="Pitluck S."/>
            <person name="Sims D."/>
            <person name="Brettin T."/>
            <person name="Detter J.C."/>
            <person name="Han C."/>
            <person name="Kuske C.R."/>
            <person name="Schmutz J."/>
            <person name="Larimer F."/>
            <person name="Land M."/>
            <person name="Hauser L."/>
            <person name="Kyrpides N."/>
            <person name="Lykidis A."/>
            <person name="Zhao J.-S."/>
            <person name="Richardson P."/>
        </authorList>
    </citation>
    <scope>NUCLEOTIDE SEQUENCE [LARGE SCALE GENOMIC DNA]</scope>
    <source>
        <strain>ATCC 51908 / MS32</strain>
    </source>
</reference>
<dbReference type="EC" id="3.5.1.18" evidence="1"/>
<dbReference type="EMBL" id="CP000961">
    <property type="protein sequence ID" value="ACA86470.1"/>
    <property type="molecule type" value="Genomic_DNA"/>
</dbReference>
<dbReference type="RefSeq" id="WP_012324814.1">
    <property type="nucleotide sequence ID" value="NC_010506.1"/>
</dbReference>
<dbReference type="SMR" id="B1KDS3"/>
<dbReference type="STRING" id="392500.Swoo_2188"/>
<dbReference type="KEGG" id="swd:Swoo_2188"/>
<dbReference type="eggNOG" id="COG0624">
    <property type="taxonomic scope" value="Bacteria"/>
</dbReference>
<dbReference type="HOGENOM" id="CLU_021802_4_0_6"/>
<dbReference type="UniPathway" id="UPA00034">
    <property type="reaction ID" value="UER00021"/>
</dbReference>
<dbReference type="Proteomes" id="UP000002168">
    <property type="component" value="Chromosome"/>
</dbReference>
<dbReference type="GO" id="GO:0008777">
    <property type="term" value="F:acetylornithine deacetylase activity"/>
    <property type="evidence" value="ECO:0007669"/>
    <property type="project" value="TreeGrafter"/>
</dbReference>
<dbReference type="GO" id="GO:0050897">
    <property type="term" value="F:cobalt ion binding"/>
    <property type="evidence" value="ECO:0007669"/>
    <property type="project" value="UniProtKB-UniRule"/>
</dbReference>
<dbReference type="GO" id="GO:0009014">
    <property type="term" value="F:succinyl-diaminopimelate desuccinylase activity"/>
    <property type="evidence" value="ECO:0007669"/>
    <property type="project" value="UniProtKB-UniRule"/>
</dbReference>
<dbReference type="GO" id="GO:0008270">
    <property type="term" value="F:zinc ion binding"/>
    <property type="evidence" value="ECO:0007669"/>
    <property type="project" value="UniProtKB-UniRule"/>
</dbReference>
<dbReference type="GO" id="GO:0019877">
    <property type="term" value="P:diaminopimelate biosynthetic process"/>
    <property type="evidence" value="ECO:0007669"/>
    <property type="project" value="UniProtKB-UniRule"/>
</dbReference>
<dbReference type="GO" id="GO:0006526">
    <property type="term" value="P:L-arginine biosynthetic process"/>
    <property type="evidence" value="ECO:0007669"/>
    <property type="project" value="TreeGrafter"/>
</dbReference>
<dbReference type="GO" id="GO:0009089">
    <property type="term" value="P:lysine biosynthetic process via diaminopimelate"/>
    <property type="evidence" value="ECO:0007669"/>
    <property type="project" value="UniProtKB-UniRule"/>
</dbReference>
<dbReference type="CDD" id="cd03891">
    <property type="entry name" value="M20_DapE_proteobac"/>
    <property type="match status" value="1"/>
</dbReference>
<dbReference type="FunFam" id="3.30.70.360:FF:000011">
    <property type="entry name" value="Succinyl-diaminopimelate desuccinylase"/>
    <property type="match status" value="1"/>
</dbReference>
<dbReference type="FunFam" id="3.40.630.10:FF:000005">
    <property type="entry name" value="Succinyl-diaminopimelate desuccinylase"/>
    <property type="match status" value="1"/>
</dbReference>
<dbReference type="Gene3D" id="1.10.150.900">
    <property type="match status" value="1"/>
</dbReference>
<dbReference type="Gene3D" id="3.30.70.360">
    <property type="match status" value="1"/>
</dbReference>
<dbReference type="Gene3D" id="3.40.630.10">
    <property type="entry name" value="Zn peptidases"/>
    <property type="match status" value="1"/>
</dbReference>
<dbReference type="HAMAP" id="MF_01690">
    <property type="entry name" value="DapE"/>
    <property type="match status" value="1"/>
</dbReference>
<dbReference type="InterPro" id="IPR001261">
    <property type="entry name" value="ArgE/DapE_CS"/>
</dbReference>
<dbReference type="InterPro" id="IPR036264">
    <property type="entry name" value="Bact_exopeptidase_dim_dom"/>
</dbReference>
<dbReference type="InterPro" id="IPR005941">
    <property type="entry name" value="DapE_proteobac"/>
</dbReference>
<dbReference type="InterPro" id="IPR002933">
    <property type="entry name" value="Peptidase_M20"/>
</dbReference>
<dbReference type="InterPro" id="IPR011650">
    <property type="entry name" value="Peptidase_M20_dimer"/>
</dbReference>
<dbReference type="InterPro" id="IPR050072">
    <property type="entry name" value="Peptidase_M20A"/>
</dbReference>
<dbReference type="NCBIfam" id="TIGR01246">
    <property type="entry name" value="dapE_proteo"/>
    <property type="match status" value="1"/>
</dbReference>
<dbReference type="NCBIfam" id="NF009557">
    <property type="entry name" value="PRK13009.1"/>
    <property type="match status" value="1"/>
</dbReference>
<dbReference type="PANTHER" id="PTHR43808">
    <property type="entry name" value="ACETYLORNITHINE DEACETYLASE"/>
    <property type="match status" value="1"/>
</dbReference>
<dbReference type="PANTHER" id="PTHR43808:SF31">
    <property type="entry name" value="N-ACETYL-L-CITRULLINE DEACETYLASE"/>
    <property type="match status" value="1"/>
</dbReference>
<dbReference type="Pfam" id="PF07687">
    <property type="entry name" value="M20_dimer"/>
    <property type="match status" value="1"/>
</dbReference>
<dbReference type="Pfam" id="PF01546">
    <property type="entry name" value="Peptidase_M20"/>
    <property type="match status" value="1"/>
</dbReference>
<dbReference type="SUPFAM" id="SSF55031">
    <property type="entry name" value="Bacterial exopeptidase dimerisation domain"/>
    <property type="match status" value="1"/>
</dbReference>
<dbReference type="SUPFAM" id="SSF53187">
    <property type="entry name" value="Zn-dependent exopeptidases"/>
    <property type="match status" value="1"/>
</dbReference>
<dbReference type="PROSITE" id="PS00759">
    <property type="entry name" value="ARGE_DAPE_CPG2_2"/>
    <property type="match status" value="1"/>
</dbReference>
<comment type="function">
    <text evidence="1">Catalyzes the hydrolysis of N-succinyl-L,L-diaminopimelic acid (SDAP), forming succinate and LL-2,6-diaminopimelate (DAP), an intermediate involved in the bacterial biosynthesis of lysine and meso-diaminopimelic acid, an essential component of bacterial cell walls.</text>
</comment>
<comment type="catalytic activity">
    <reaction evidence="1">
        <text>N-succinyl-(2S,6S)-2,6-diaminopimelate + H2O = (2S,6S)-2,6-diaminopimelate + succinate</text>
        <dbReference type="Rhea" id="RHEA:22608"/>
        <dbReference type="ChEBI" id="CHEBI:15377"/>
        <dbReference type="ChEBI" id="CHEBI:30031"/>
        <dbReference type="ChEBI" id="CHEBI:57609"/>
        <dbReference type="ChEBI" id="CHEBI:58087"/>
        <dbReference type="EC" id="3.5.1.18"/>
    </reaction>
</comment>
<comment type="cofactor">
    <cofactor evidence="1">
        <name>Zn(2+)</name>
        <dbReference type="ChEBI" id="CHEBI:29105"/>
    </cofactor>
    <cofactor evidence="1">
        <name>Co(2+)</name>
        <dbReference type="ChEBI" id="CHEBI:48828"/>
    </cofactor>
    <text evidence="1">Binds 2 Zn(2+) or Co(2+) ions per subunit.</text>
</comment>
<comment type="pathway">
    <text evidence="1">Amino-acid biosynthesis; L-lysine biosynthesis via DAP pathway; LL-2,6-diaminopimelate from (S)-tetrahydrodipicolinate (succinylase route): step 3/3.</text>
</comment>
<comment type="subunit">
    <text evidence="1">Homodimer.</text>
</comment>
<comment type="similarity">
    <text evidence="1">Belongs to the peptidase M20A family. DapE subfamily.</text>
</comment>
<accession>B1KDS3</accession>